<name>YHEU_ECOLU</name>
<protein>
    <recommendedName>
        <fullName evidence="1">UPF0270 protein YheU</fullName>
    </recommendedName>
</protein>
<dbReference type="EMBL" id="CU928163">
    <property type="protein sequence ID" value="CAR14963.1"/>
    <property type="molecule type" value="Genomic_DNA"/>
</dbReference>
<dbReference type="RefSeq" id="WP_000907085.1">
    <property type="nucleotide sequence ID" value="NC_011751.1"/>
</dbReference>
<dbReference type="RefSeq" id="YP_002414468.1">
    <property type="nucleotide sequence ID" value="NC_011751.1"/>
</dbReference>
<dbReference type="SMR" id="B7NDW3"/>
<dbReference type="STRING" id="585056.ECUMN_3816"/>
<dbReference type="KEGG" id="eum:ECUMN_3816"/>
<dbReference type="PATRIC" id="fig|585056.7.peg.3989"/>
<dbReference type="HOGENOM" id="CLU_186759_1_0_6"/>
<dbReference type="Proteomes" id="UP000007097">
    <property type="component" value="Chromosome"/>
</dbReference>
<dbReference type="Gene3D" id="1.10.10.610">
    <property type="entry name" value="YehU-like"/>
    <property type="match status" value="1"/>
</dbReference>
<dbReference type="HAMAP" id="MF_00690">
    <property type="entry name" value="UPF0270"/>
    <property type="match status" value="1"/>
</dbReference>
<dbReference type="InterPro" id="IPR010648">
    <property type="entry name" value="UPF0270"/>
</dbReference>
<dbReference type="InterPro" id="IPR036685">
    <property type="entry name" value="YehU-like_sf"/>
</dbReference>
<dbReference type="NCBIfam" id="NF003438">
    <property type="entry name" value="PRK04966.1"/>
    <property type="match status" value="1"/>
</dbReference>
<dbReference type="Pfam" id="PF06794">
    <property type="entry name" value="UPF0270"/>
    <property type="match status" value="1"/>
</dbReference>
<dbReference type="PIRSF" id="PIRSF006169">
    <property type="entry name" value="UCP006169"/>
    <property type="match status" value="1"/>
</dbReference>
<dbReference type="SUPFAM" id="SSF118001">
    <property type="entry name" value="YehU-like"/>
    <property type="match status" value="1"/>
</dbReference>
<reference key="1">
    <citation type="journal article" date="2009" name="PLoS Genet.">
        <title>Organised genome dynamics in the Escherichia coli species results in highly diverse adaptive paths.</title>
        <authorList>
            <person name="Touchon M."/>
            <person name="Hoede C."/>
            <person name="Tenaillon O."/>
            <person name="Barbe V."/>
            <person name="Baeriswyl S."/>
            <person name="Bidet P."/>
            <person name="Bingen E."/>
            <person name="Bonacorsi S."/>
            <person name="Bouchier C."/>
            <person name="Bouvet O."/>
            <person name="Calteau A."/>
            <person name="Chiapello H."/>
            <person name="Clermont O."/>
            <person name="Cruveiller S."/>
            <person name="Danchin A."/>
            <person name="Diard M."/>
            <person name="Dossat C."/>
            <person name="Karoui M.E."/>
            <person name="Frapy E."/>
            <person name="Garry L."/>
            <person name="Ghigo J.M."/>
            <person name="Gilles A.M."/>
            <person name="Johnson J."/>
            <person name="Le Bouguenec C."/>
            <person name="Lescat M."/>
            <person name="Mangenot S."/>
            <person name="Martinez-Jehanne V."/>
            <person name="Matic I."/>
            <person name="Nassif X."/>
            <person name="Oztas S."/>
            <person name="Petit M.A."/>
            <person name="Pichon C."/>
            <person name="Rouy Z."/>
            <person name="Ruf C.S."/>
            <person name="Schneider D."/>
            <person name="Tourret J."/>
            <person name="Vacherie B."/>
            <person name="Vallenet D."/>
            <person name="Medigue C."/>
            <person name="Rocha E.P.C."/>
            <person name="Denamur E."/>
        </authorList>
    </citation>
    <scope>NUCLEOTIDE SEQUENCE [LARGE SCALE GENOMIC DNA]</scope>
    <source>
        <strain>UMN026 / ExPEC</strain>
    </source>
</reference>
<feature type="chain" id="PRO_1000132011" description="UPF0270 protein YheU">
    <location>
        <begin position="1"/>
        <end position="72"/>
    </location>
</feature>
<organism>
    <name type="scientific">Escherichia coli O17:K52:H18 (strain UMN026 / ExPEC)</name>
    <dbReference type="NCBI Taxonomy" id="585056"/>
    <lineage>
        <taxon>Bacteria</taxon>
        <taxon>Pseudomonadati</taxon>
        <taxon>Pseudomonadota</taxon>
        <taxon>Gammaproteobacteria</taxon>
        <taxon>Enterobacterales</taxon>
        <taxon>Enterobacteriaceae</taxon>
        <taxon>Escherichia</taxon>
    </lineage>
</organism>
<evidence type="ECO:0000255" key="1">
    <source>
        <dbReference type="HAMAP-Rule" id="MF_00690"/>
    </source>
</evidence>
<gene>
    <name evidence="1" type="primary">yheU</name>
    <name type="ordered locus">ECUMN_3816</name>
</gene>
<accession>B7NDW3</accession>
<sequence length="72" mass="8470">MLIPWQDLSPETLENLIESFVLREGTDYGEHERTLEQKVADVKRQLQCGEAVLVWSELHETVNIMPRSQFRE</sequence>
<proteinExistence type="inferred from homology"/>
<comment type="similarity">
    <text evidence="1">Belongs to the UPF0270 family.</text>
</comment>